<sequence>MAGGAAHPGAELLPFARFLDSSLQPLVYGYGRGTLHELRAREFGRLAGTVYLDHAGTTLFPQSQITSFMKDLMENVYGNPHSQNISSKLTHDTVEQVRFRILAHFHTSPEDYTVIFTSGSTAALKLVAEAFPWVSPGPEGSGSCFCYLTDSHTSVVGMRKITAAMNVSSIPVRPEDMWSAERQDAAAAGDPAGQPPHLFCYPAQSNFSGTRYPLSWIGEVKSGRRRPASRPGKWFVLLDAAAFVGTSPLDLSVHQADFVPISFYKIFGFPTGLGALLVNNRLAALLRKTYFGGGTAAAYLAGDDFYVPRESVAERFEDGTISFLDVIALKHGFDALERLTGGMESIRQHTFTLAQYTYTALSSLRYPNGAPVVQIYSDSDFSSPEVQGPVISFNVLDDHGNVVGYSQVDKMASLHNIHVRTGCFCNTGACQRHLGISDEMVKKHLQAGHVCGDDVDLIDGQPTGSVRISFGYMSTLEDAQAFLRFIIATRLHSSHGQPLPLATPGEAGAPPEDSEAQNAVPAARARGSSSPQEDTSPHSGVWNNSPTAVDAEGLCPPLLEATGTQQTTSEKAADVPDGDLRSHVITNLFLYPIKSCAAFEVIRWPLGSQGLLYDRSWMVVNHNGICLSQKQEPRLCLIQPFIDLQRRIMVIKAQGMEPIEVPLEENSEQVQICQSKVCADRVNTYDCGEKISNWLSKFFGRPYHLIKQSSDFQRNAKKKHGKDQSAHTTATLSLVNEAQYLLINRSSILELQQQLSTSCENGKEELFPMNNLISRFRANIITNGTRAFEEEKWDEISIGSLRFQVLGPCHRCQMICIDQQTGQRNQDVFQKLSERRERKVKFGVYLMHTSLDLSSPCYLSVGSQVLPLLKENMEHHDIPATE</sequence>
<gene>
    <name evidence="2" type="primary">MOCOS</name>
    <name type="synonym">MCSU</name>
</gene>
<dbReference type="EC" id="2.8.1.9" evidence="2"/>
<dbReference type="EMBL" id="AB036422">
    <property type="protein sequence ID" value="BAA98138.1"/>
    <property type="molecule type" value="mRNA"/>
</dbReference>
<dbReference type="EMBL" id="DAAA02056390">
    <property type="status" value="NOT_ANNOTATED_CDS"/>
    <property type="molecule type" value="Genomic_DNA"/>
</dbReference>
<dbReference type="EMBL" id="BF045807">
    <property type="status" value="NOT_ANNOTATED_CDS"/>
    <property type="molecule type" value="mRNA"/>
</dbReference>
<dbReference type="RefSeq" id="NP_776506.1">
    <property type="nucleotide sequence ID" value="NM_174081.2"/>
</dbReference>
<dbReference type="RefSeq" id="XP_024839945.1">
    <molecule id="Q9N0E7-1"/>
    <property type="nucleotide sequence ID" value="XM_024984177.2"/>
</dbReference>
<dbReference type="SMR" id="Q9N0E7"/>
<dbReference type="FunCoup" id="Q9N0E7">
    <property type="interactions" value="931"/>
</dbReference>
<dbReference type="STRING" id="9913.ENSBTAP00000055724"/>
<dbReference type="PaxDb" id="9913-ENSBTAP00000055724"/>
<dbReference type="Ensembl" id="ENSBTAT00000048768.2">
    <molecule id="Q9N0E7-2"/>
    <property type="protein sequence ID" value="ENSBTAP00000045753.1"/>
    <property type="gene ID" value="ENSBTAG00000012252.7"/>
</dbReference>
<dbReference type="GeneID" id="281226"/>
<dbReference type="KEGG" id="bta:281226"/>
<dbReference type="CTD" id="55034"/>
<dbReference type="VEuPathDB" id="HostDB:ENSBTAG00000012252"/>
<dbReference type="eggNOG" id="KOG2142">
    <property type="taxonomic scope" value="Eukaryota"/>
</dbReference>
<dbReference type="GeneTree" id="ENSGT00940000157051"/>
<dbReference type="HOGENOM" id="CLU_010913_0_1_1"/>
<dbReference type="InParanoid" id="Q9N0E7"/>
<dbReference type="OMA" id="PCTRCQM"/>
<dbReference type="OrthoDB" id="420046at2759"/>
<dbReference type="TreeFam" id="TF105761"/>
<dbReference type="Reactome" id="R-BTA-947581">
    <property type="pathway name" value="Molybdenum cofactor biosynthesis"/>
</dbReference>
<dbReference type="UniPathway" id="UPA00344"/>
<dbReference type="Proteomes" id="UP000009136">
    <property type="component" value="Chromosome 24"/>
</dbReference>
<dbReference type="Bgee" id="ENSBTAG00000012252">
    <property type="expression patterns" value="Expressed in oviduct epithelium and 101 other cell types or tissues"/>
</dbReference>
<dbReference type="GO" id="GO:0016829">
    <property type="term" value="F:lyase activity"/>
    <property type="evidence" value="ECO:0007669"/>
    <property type="project" value="UniProtKB-UniRule"/>
</dbReference>
<dbReference type="GO" id="GO:0008265">
    <property type="term" value="F:molybdenum cofactor sulfurtransferase activity"/>
    <property type="evidence" value="ECO:0000315"/>
    <property type="project" value="UniProtKB"/>
</dbReference>
<dbReference type="GO" id="GO:0030151">
    <property type="term" value="F:molybdenum ion binding"/>
    <property type="evidence" value="ECO:0007669"/>
    <property type="project" value="UniProtKB-UniRule"/>
</dbReference>
<dbReference type="GO" id="GO:0030170">
    <property type="term" value="F:pyridoxal phosphate binding"/>
    <property type="evidence" value="ECO:0007669"/>
    <property type="project" value="UniProtKB-UniRule"/>
</dbReference>
<dbReference type="GO" id="GO:0006777">
    <property type="term" value="P:Mo-molybdopterin cofactor biosynthetic process"/>
    <property type="evidence" value="ECO:0007669"/>
    <property type="project" value="UniProtKB-UniRule"/>
</dbReference>
<dbReference type="GO" id="GO:0043545">
    <property type="term" value="P:molybdopterin cofactor metabolic process"/>
    <property type="evidence" value="ECO:0000315"/>
    <property type="project" value="UniProtKB"/>
</dbReference>
<dbReference type="FunFam" id="3.40.640.10:FF:000096">
    <property type="entry name" value="Molybdenum cofactor sulfurase"/>
    <property type="match status" value="1"/>
</dbReference>
<dbReference type="Gene3D" id="3.40.640.10">
    <property type="entry name" value="Type I PLP-dependent aspartate aminotransferase-like (Major domain)"/>
    <property type="match status" value="1"/>
</dbReference>
<dbReference type="HAMAP" id="MF_03050">
    <property type="entry name" value="MOCOS"/>
    <property type="match status" value="1"/>
</dbReference>
<dbReference type="InterPro" id="IPR000192">
    <property type="entry name" value="Aminotrans_V_dom"/>
</dbReference>
<dbReference type="InterPro" id="IPR005302">
    <property type="entry name" value="MoCF_Sase_C"/>
</dbReference>
<dbReference type="InterPro" id="IPR028886">
    <property type="entry name" value="MoCo_sulfurase"/>
</dbReference>
<dbReference type="InterPro" id="IPR005303">
    <property type="entry name" value="MOCOS_middle"/>
</dbReference>
<dbReference type="InterPro" id="IPR015424">
    <property type="entry name" value="PyrdxlP-dep_Trfase"/>
</dbReference>
<dbReference type="InterPro" id="IPR015421">
    <property type="entry name" value="PyrdxlP-dep_Trfase_major"/>
</dbReference>
<dbReference type="InterPro" id="IPR011037">
    <property type="entry name" value="Pyrv_Knase-like_insert_dom_sf"/>
</dbReference>
<dbReference type="PANTHER" id="PTHR14237:SF19">
    <property type="entry name" value="MITOCHONDRIAL AMIDOXIME REDUCING COMPONENT 1"/>
    <property type="match status" value="1"/>
</dbReference>
<dbReference type="PANTHER" id="PTHR14237">
    <property type="entry name" value="MOLYBDOPTERIN COFACTOR SULFURASE MOSC"/>
    <property type="match status" value="1"/>
</dbReference>
<dbReference type="Pfam" id="PF00266">
    <property type="entry name" value="Aminotran_5"/>
    <property type="match status" value="1"/>
</dbReference>
<dbReference type="Pfam" id="PF03473">
    <property type="entry name" value="MOSC"/>
    <property type="match status" value="1"/>
</dbReference>
<dbReference type="Pfam" id="PF03476">
    <property type="entry name" value="MOSC_N"/>
    <property type="match status" value="1"/>
</dbReference>
<dbReference type="SUPFAM" id="SSF141673">
    <property type="entry name" value="MOSC N-terminal domain-like"/>
    <property type="match status" value="1"/>
</dbReference>
<dbReference type="SUPFAM" id="SSF50800">
    <property type="entry name" value="PK beta-barrel domain-like"/>
    <property type="match status" value="1"/>
</dbReference>
<dbReference type="SUPFAM" id="SSF53383">
    <property type="entry name" value="PLP-dependent transferases"/>
    <property type="match status" value="1"/>
</dbReference>
<dbReference type="PROSITE" id="PS51340">
    <property type="entry name" value="MOSC"/>
    <property type="match status" value="1"/>
</dbReference>
<keyword id="KW-0025">Alternative splicing</keyword>
<keyword id="KW-0501">Molybdenum cofactor biosynthesis</keyword>
<keyword id="KW-0597">Phosphoprotein</keyword>
<keyword id="KW-0663">Pyridoxal phosphate</keyword>
<keyword id="KW-1185">Reference proteome</keyword>
<keyword id="KW-0808">Transferase</keyword>
<comment type="function">
    <text>Sulfurates the molybdenum cofactor. Sulfation of molybdenum is essential for xanthine dehydrogenase (XDH) and aldehyde oxidase (ADO) enzymes in which molybdenum cofactor is liganded by 1 oxygen and 1 sulfur atom in active form.</text>
</comment>
<comment type="catalytic activity">
    <reaction evidence="2">
        <text>Mo-molybdopterin + L-cysteine + AH2 = thio-Mo-molybdopterin + L-alanine + A + H2O</text>
        <dbReference type="Rhea" id="RHEA:42636"/>
        <dbReference type="ChEBI" id="CHEBI:13193"/>
        <dbReference type="ChEBI" id="CHEBI:15377"/>
        <dbReference type="ChEBI" id="CHEBI:17499"/>
        <dbReference type="ChEBI" id="CHEBI:35235"/>
        <dbReference type="ChEBI" id="CHEBI:57972"/>
        <dbReference type="ChEBI" id="CHEBI:71302"/>
        <dbReference type="ChEBI" id="CHEBI:82685"/>
        <dbReference type="EC" id="2.8.1.9"/>
    </reaction>
</comment>
<comment type="cofactor">
    <cofactor evidence="2">
        <name>pyridoxal 5'-phosphate</name>
        <dbReference type="ChEBI" id="CHEBI:597326"/>
    </cofactor>
</comment>
<comment type="pathway">
    <text evidence="1">Cofactor biosynthesis; molybdopterin biosynthesis.</text>
</comment>
<comment type="alternative products">
    <event type="alternative splicing"/>
    <isoform>
        <id>Q9N0E7-1</id>
        <name>1</name>
        <sequence type="displayed"/>
    </isoform>
    <isoform>
        <id>Q9N0E7-2</id>
        <name>2</name>
        <sequence type="described" ref="VSP_036820"/>
    </isoform>
</comment>
<comment type="tissue specificity">
    <text evidence="4">Ubiquitously expressed.</text>
</comment>
<comment type="disease">
    <text>Defects in MOCOS are the cause of xanthinuria type II (XU-II). XU-II is characterized by excretion of very large amounts of xanthine in the urine and a tendency to form xanthine stones. Uric acid is strikingly diminished in serum and urine. In addition, cows suffering of XU-II cannot metabolize allopurinol into oxypurinol due to the lack of ADO activity.</text>
</comment>
<comment type="similarity">
    <text evidence="2">Belongs to the class-V pyridoxal-phosphate-dependent aminotransferase family. MOCOS subfamily.</text>
</comment>
<feature type="chain" id="PRO_0000249951" description="Molybdenum cofactor sulfurase">
    <location>
        <begin position="1"/>
        <end position="882"/>
    </location>
</feature>
<feature type="domain" description="MOSC" evidence="2">
    <location>
        <begin position="707"/>
        <end position="868"/>
    </location>
</feature>
<feature type="region of interest" description="Disordered" evidence="3">
    <location>
        <begin position="496"/>
        <end position="546"/>
    </location>
</feature>
<feature type="compositionally biased region" description="Polar residues" evidence="3">
    <location>
        <begin position="527"/>
        <end position="546"/>
    </location>
</feature>
<feature type="active site" evidence="2">
    <location>
        <position position="425"/>
    </location>
</feature>
<feature type="modified residue" description="N6-(pyridoxal phosphate)lysine" evidence="2">
    <location>
        <position position="265"/>
    </location>
</feature>
<feature type="modified residue" description="Phosphoserine" evidence="1">
    <location>
        <position position="528"/>
    </location>
</feature>
<feature type="modified residue" description="Phosphoserine" evidence="1">
    <location>
        <position position="530"/>
    </location>
</feature>
<feature type="splice variant" id="VSP_036820" description="In isoform 2." evidence="5">
    <original>MAGGAAHPGAELLPFARFLDSSLQPLVYGYGRGTLHELRAREFGRLA</original>
    <variation>MQSRQPRALLPRSP</variation>
    <location>
        <begin position="1"/>
        <end position="47"/>
    </location>
</feature>
<feature type="sequence variant" description="Requires 2 nucleotide substitutions." evidence="4">
    <original>G</original>
    <variation>P</variation>
    <location>
        <position position="193"/>
    </location>
</feature>
<feature type="sequence variant" description="In XU-II." evidence="4">
    <location>
        <position position="290"/>
    </location>
</feature>
<feature type="sequence conflict" description="In Ref. 1; BAA98138." evidence="6" ref="1">
    <original>V</original>
    <variation>M</variation>
    <location>
        <position position="520"/>
    </location>
</feature>
<name>MOCOS_BOVIN</name>
<protein>
    <recommendedName>
        <fullName evidence="2">Molybdenum cofactor sulfurase</fullName>
        <shortName evidence="2">MCS</shortName>
        <shortName evidence="2">MOS</shortName>
        <shortName evidence="2">MoCo sulfurase</shortName>
        <ecNumber evidence="2">2.8.1.9</ecNumber>
    </recommendedName>
    <alternativeName>
        <fullName evidence="2">Molybdenum cofactor sulfurtransferase</fullName>
    </alternativeName>
</protein>
<reference key="1">
    <citation type="journal article" date="2000" name="J. Biol. Chem.">
        <title>Deletion mutation in Droshophila ma-l homologous, putative molybdopterin cofactor sulfurase gene is associated with bovine xanthinuria type II.</title>
        <authorList>
            <person name="Watanabe T."/>
            <person name="Ihara N."/>
            <person name="Itoh T."/>
            <person name="Fujita T."/>
            <person name="Sugimoto Y."/>
        </authorList>
    </citation>
    <scope>NUCLEOTIDE SEQUENCE [MRNA] (ISOFORM 2)</scope>
    <scope>INVOLVEMENT IN XU-II</scope>
    <scope>TISSUE SPECIFICITY</scope>
    <scope>VARIANT PRO-193</scope>
    <scope>VARIANT XU-II TYR-290 DEL</scope>
    <source>
        <tissue>Liver</tissue>
    </source>
</reference>
<reference key="2">
    <citation type="journal article" date="2009" name="Genome Biol.">
        <title>A whole-genome assembly of the domestic cow, Bos taurus.</title>
        <authorList>
            <person name="Zimin A.V."/>
            <person name="Delcher A.L."/>
            <person name="Florea L."/>
            <person name="Kelley D.R."/>
            <person name="Schatz M.C."/>
            <person name="Puiu D."/>
            <person name="Hanrahan F."/>
            <person name="Pertea G."/>
            <person name="Van Tassell C.P."/>
            <person name="Sonstegard T.S."/>
            <person name="Marcais G."/>
            <person name="Roberts M."/>
            <person name="Subramanian P."/>
            <person name="Yorke J.A."/>
            <person name="Salzberg S.L."/>
        </authorList>
    </citation>
    <scope>NUCLEOTIDE SEQUENCE [LARGE SCALE GENOMIC DNA]</scope>
    <source>
        <strain>Hereford</strain>
    </source>
</reference>
<reference key="3">
    <citation type="submission" date="2000-10" db="EMBL/GenBank/DDBJ databases">
        <title>Bovine ESTs.</title>
        <authorList>
            <person name="Lewin H.A."/>
            <person name="Soares M.B."/>
            <person name="Rebeiz M."/>
            <person name="Pardinas J."/>
            <person name="Liu L."/>
            <person name="Larson J.H."/>
        </authorList>
    </citation>
    <scope>NUCLEOTIDE SEQUENCE [LARGE SCALE MRNA] OF 1-133 (ISOFORM 1)</scope>
</reference>
<evidence type="ECO:0000250" key="1">
    <source>
        <dbReference type="UniProtKB" id="Q96EN8"/>
    </source>
</evidence>
<evidence type="ECO:0000255" key="2">
    <source>
        <dbReference type="HAMAP-Rule" id="MF_03050"/>
    </source>
</evidence>
<evidence type="ECO:0000256" key="3">
    <source>
        <dbReference type="SAM" id="MobiDB-lite"/>
    </source>
</evidence>
<evidence type="ECO:0000269" key="4">
    <source>
    </source>
</evidence>
<evidence type="ECO:0000303" key="5">
    <source>
    </source>
</evidence>
<evidence type="ECO:0000305" key="6"/>
<proteinExistence type="evidence at transcript level"/>
<accession>Q9N0E7</accession>
<accession>F1N3A9</accession>
<accession>G3N1I0</accession>
<organism>
    <name type="scientific">Bos taurus</name>
    <name type="common">Bovine</name>
    <dbReference type="NCBI Taxonomy" id="9913"/>
    <lineage>
        <taxon>Eukaryota</taxon>
        <taxon>Metazoa</taxon>
        <taxon>Chordata</taxon>
        <taxon>Craniata</taxon>
        <taxon>Vertebrata</taxon>
        <taxon>Euteleostomi</taxon>
        <taxon>Mammalia</taxon>
        <taxon>Eutheria</taxon>
        <taxon>Laurasiatheria</taxon>
        <taxon>Artiodactyla</taxon>
        <taxon>Ruminantia</taxon>
        <taxon>Pecora</taxon>
        <taxon>Bovidae</taxon>
        <taxon>Bovinae</taxon>
        <taxon>Bos</taxon>
    </lineage>
</organism>